<sequence length="432" mass="47697">MKFTLVATVLLTFSLSAFAVEYPVLTTASPDQVGFDSQKLHRLDGWIQNQIDAGYPSINLLVIKDNHIVLQKAWGYAKKYDGSTLLAHPIRATTNTMYDLASNTKMYATNFALQKLVYEGKIDVNDLVSKYIPGFKDMPGDKIKGKNKLRIIDILHHVAGFPADPQYPNKNVAGKLFSQSKSTTLEMIKKTPLEYQPGSKHIYSDVDYMILGFIIESITAMPLDRYVETTIYKPLGLKHTVFNPLMKGFTPPQIAATELHGNTRDGVIHFPNIRTNTLWGQVHDEKAWYSMGGVSGHAGLFSDTHDMAVLMQVMLNGGGYGNVKLFDDKTVAQFTRRSPEDATFGLGWRVNGNASMTPTFGVLASPQTYGHTGWTGTLTSIDPVNHMAIVILGNRPHSPVANPKVNPNVFVSGLLPAATYGWIVDQIYGSLK</sequence>
<proteinExistence type="inferred from homology"/>
<keyword id="KW-0121">Carboxypeptidase</keyword>
<keyword id="KW-0997">Cell inner membrane</keyword>
<keyword id="KW-1003">Cell membrane</keyword>
<keyword id="KW-0378">Hydrolase</keyword>
<keyword id="KW-0472">Membrane</keyword>
<keyword id="KW-0645">Protease</keyword>
<keyword id="KW-1185">Reference proteome</keyword>
<keyword id="KW-0812">Transmembrane</keyword>
<keyword id="KW-1133">Transmembrane helix</keyword>
<dbReference type="EC" id="3.4.16.4" evidence="1"/>
<dbReference type="EMBL" id="AE006468">
    <property type="protein sequence ID" value="AAL21372.1"/>
    <property type="molecule type" value="Genomic_DNA"/>
</dbReference>
<dbReference type="RefSeq" id="NP_461413.1">
    <property type="nucleotide sequence ID" value="NC_003197.2"/>
</dbReference>
<dbReference type="SMR" id="Q8ZN80"/>
<dbReference type="STRING" id="99287.STM2478"/>
<dbReference type="MEROPS" id="S12.A03"/>
<dbReference type="PaxDb" id="99287-STM2478"/>
<dbReference type="GeneID" id="1254000"/>
<dbReference type="KEGG" id="stm:STM2478"/>
<dbReference type="PATRIC" id="fig|99287.12.peg.2616"/>
<dbReference type="HOGENOM" id="CLU_020027_1_2_6"/>
<dbReference type="OMA" id="AGWAVRY"/>
<dbReference type="PhylomeDB" id="Q8ZN80"/>
<dbReference type="BioCyc" id="SENT99287:STM2478-MONOMER"/>
<dbReference type="Proteomes" id="UP000001014">
    <property type="component" value="Chromosome"/>
</dbReference>
<dbReference type="GO" id="GO:0005886">
    <property type="term" value="C:plasma membrane"/>
    <property type="evidence" value="ECO:0007669"/>
    <property type="project" value="UniProtKB-SubCell"/>
</dbReference>
<dbReference type="GO" id="GO:0009002">
    <property type="term" value="F:serine-type D-Ala-D-Ala carboxypeptidase activity"/>
    <property type="evidence" value="ECO:0007669"/>
    <property type="project" value="UniProtKB-UniRule"/>
</dbReference>
<dbReference type="GO" id="GO:0006508">
    <property type="term" value="P:proteolysis"/>
    <property type="evidence" value="ECO:0007669"/>
    <property type="project" value="UniProtKB-KW"/>
</dbReference>
<dbReference type="Gene3D" id="3.40.710.10">
    <property type="entry name" value="DD-peptidase/beta-lactamase superfamily"/>
    <property type="match status" value="1"/>
</dbReference>
<dbReference type="HAMAP" id="MF_01034">
    <property type="entry name" value="S12_YfeW"/>
    <property type="match status" value="1"/>
</dbReference>
<dbReference type="InterPro" id="IPR001466">
    <property type="entry name" value="Beta-lactam-related"/>
</dbReference>
<dbReference type="InterPro" id="IPR012338">
    <property type="entry name" value="Beta-lactam/transpept-like"/>
</dbReference>
<dbReference type="InterPro" id="IPR050789">
    <property type="entry name" value="Diverse_Enzym_Activities"/>
</dbReference>
<dbReference type="InterPro" id="IPR022849">
    <property type="entry name" value="Pept_S12_YfeW/YbbE-like"/>
</dbReference>
<dbReference type="NCBIfam" id="NF002968">
    <property type="entry name" value="PRK03642.1"/>
    <property type="match status" value="1"/>
</dbReference>
<dbReference type="PANTHER" id="PTHR43283">
    <property type="entry name" value="BETA-LACTAMASE-RELATED"/>
    <property type="match status" value="1"/>
</dbReference>
<dbReference type="PANTHER" id="PTHR43283:SF11">
    <property type="entry name" value="BETA-LACTAMASE-RELATED DOMAIN-CONTAINING PROTEIN"/>
    <property type="match status" value="1"/>
</dbReference>
<dbReference type="Pfam" id="PF00144">
    <property type="entry name" value="Beta-lactamase"/>
    <property type="match status" value="1"/>
</dbReference>
<dbReference type="SUPFAM" id="SSF56601">
    <property type="entry name" value="beta-lactamase/transpeptidase-like"/>
    <property type="match status" value="1"/>
</dbReference>
<gene>
    <name evidence="1" type="primary">yfeW</name>
    <name type="ordered locus">STM2478</name>
</gene>
<reference key="1">
    <citation type="journal article" date="2001" name="Nature">
        <title>Complete genome sequence of Salmonella enterica serovar Typhimurium LT2.</title>
        <authorList>
            <person name="McClelland M."/>
            <person name="Sanderson K.E."/>
            <person name="Spieth J."/>
            <person name="Clifton S.W."/>
            <person name="Latreille P."/>
            <person name="Courtney L."/>
            <person name="Porwollik S."/>
            <person name="Ali J."/>
            <person name="Dante M."/>
            <person name="Du F."/>
            <person name="Hou S."/>
            <person name="Layman D."/>
            <person name="Leonard S."/>
            <person name="Nguyen C."/>
            <person name="Scott K."/>
            <person name="Holmes A."/>
            <person name="Grewal N."/>
            <person name="Mulvaney E."/>
            <person name="Ryan E."/>
            <person name="Sun H."/>
            <person name="Florea L."/>
            <person name="Miller W."/>
            <person name="Stoneking T."/>
            <person name="Nhan M."/>
            <person name="Waterston R."/>
            <person name="Wilson R.K."/>
        </authorList>
    </citation>
    <scope>NUCLEOTIDE SEQUENCE [LARGE SCALE GENOMIC DNA]</scope>
    <source>
        <strain>LT2 / SGSC1412 / ATCC 700720</strain>
    </source>
</reference>
<accession>Q8ZN80</accession>
<organism>
    <name type="scientific">Salmonella typhimurium (strain LT2 / SGSC1412 / ATCC 700720)</name>
    <dbReference type="NCBI Taxonomy" id="99287"/>
    <lineage>
        <taxon>Bacteria</taxon>
        <taxon>Pseudomonadati</taxon>
        <taxon>Pseudomonadota</taxon>
        <taxon>Gammaproteobacteria</taxon>
        <taxon>Enterobacterales</taxon>
        <taxon>Enterobacteriaceae</taxon>
        <taxon>Salmonella</taxon>
    </lineage>
</organism>
<name>YFEW_SALTY</name>
<protein>
    <recommendedName>
        <fullName evidence="1">Putative D-alanyl-D-alanine carboxypeptidase</fullName>
        <ecNumber evidence="1">3.4.16.4</ecNumber>
    </recommendedName>
    <alternativeName>
        <fullName evidence="1">DD-carboxypeptidase</fullName>
        <shortName evidence="1">DD-CPase</shortName>
    </alternativeName>
</protein>
<feature type="chain" id="PRO_0000036259" description="Putative D-alanyl-D-alanine carboxypeptidase">
    <location>
        <begin position="1"/>
        <end position="432"/>
    </location>
</feature>
<feature type="transmembrane region" description="Helical; Signal-anchor" evidence="1">
    <location>
        <begin position="7"/>
        <end position="25"/>
    </location>
</feature>
<evidence type="ECO:0000255" key="1">
    <source>
        <dbReference type="HAMAP-Rule" id="MF_01034"/>
    </source>
</evidence>
<comment type="catalytic activity">
    <reaction evidence="1">
        <text>Preferential cleavage: (Ac)2-L-Lys-D-Ala-|-D-Ala. Also transpeptidation of peptidyl-alanyl moieties that are N-acyl substituents of D-alanine.</text>
        <dbReference type="EC" id="3.4.16.4"/>
    </reaction>
</comment>
<comment type="subcellular location">
    <subcellularLocation>
        <location evidence="1">Cell inner membrane</location>
        <topology evidence="1">Single-pass membrane protein</topology>
    </subcellularLocation>
</comment>
<comment type="similarity">
    <text evidence="1">Belongs to the peptidase S12 family. YfeW subfamily.</text>
</comment>